<reference key="1">
    <citation type="submission" date="2008-02" db="EMBL/GenBank/DDBJ databases">
        <title>Complete sequence of Shewanella woodyi ATCC 51908.</title>
        <authorList>
            <consortium name="US DOE Joint Genome Institute"/>
            <person name="Copeland A."/>
            <person name="Lucas S."/>
            <person name="Lapidus A."/>
            <person name="Glavina del Rio T."/>
            <person name="Dalin E."/>
            <person name="Tice H."/>
            <person name="Bruce D."/>
            <person name="Goodwin L."/>
            <person name="Pitluck S."/>
            <person name="Sims D."/>
            <person name="Brettin T."/>
            <person name="Detter J.C."/>
            <person name="Han C."/>
            <person name="Kuske C.R."/>
            <person name="Schmutz J."/>
            <person name="Larimer F."/>
            <person name="Land M."/>
            <person name="Hauser L."/>
            <person name="Kyrpides N."/>
            <person name="Lykidis A."/>
            <person name="Zhao J.-S."/>
            <person name="Richardson P."/>
        </authorList>
    </citation>
    <scope>NUCLEOTIDE SEQUENCE [LARGE SCALE GENOMIC DNA]</scope>
    <source>
        <strain>ATCC 51908 / MS32</strain>
    </source>
</reference>
<proteinExistence type="inferred from homology"/>
<organism>
    <name type="scientific">Shewanella woodyi (strain ATCC 51908 / MS32)</name>
    <dbReference type="NCBI Taxonomy" id="392500"/>
    <lineage>
        <taxon>Bacteria</taxon>
        <taxon>Pseudomonadati</taxon>
        <taxon>Pseudomonadota</taxon>
        <taxon>Gammaproteobacteria</taxon>
        <taxon>Alteromonadales</taxon>
        <taxon>Shewanellaceae</taxon>
        <taxon>Shewanella</taxon>
    </lineage>
</organism>
<name>OBG_SHEWM</name>
<accession>B1KGH1</accession>
<sequence length="389" mass="43079">MKFVDEAVIRVEAGDGGSGCVSFRREKYVPDGGPDGGDGGDGGSVYLQADESYNTLIDFQFERFHRAERGKNGRGRDCTGHGGEDLILTVPVGTRAIDEETQESLGDLTKHGQRMLVAKGGFHGLGNTRFKSSTNRAPRQKTLGTPGEVRSLKLELMLLADVGLLGMPNAGKSTFIRSVSRAKPKVADYPFTTLVPNLGVVNPRHGQSFVIADIPGLIEGAADGAGLGVQFLKHLERCRVLLHILDIDPIDGSDPVESARAIVAELEKHSPKLASKPRWLVINKTDLMLEDELKERVENIVKELEWEGDVYTISAYNREGTEALSLKLIDFIEALPPEEEIDKEAEVEFKWDNYHENANESLNENFEDDFDDDDDFDDDDYDVKVIYQR</sequence>
<keyword id="KW-0963">Cytoplasm</keyword>
<keyword id="KW-0342">GTP-binding</keyword>
<keyword id="KW-0378">Hydrolase</keyword>
<keyword id="KW-0460">Magnesium</keyword>
<keyword id="KW-0479">Metal-binding</keyword>
<keyword id="KW-0547">Nucleotide-binding</keyword>
<keyword id="KW-1185">Reference proteome</keyword>
<comment type="function">
    <text evidence="1">An essential GTPase which binds GTP, GDP and possibly (p)ppGpp with moderate affinity, with high nucleotide exchange rates and a fairly low GTP hydrolysis rate. Plays a role in control of the cell cycle, stress response, ribosome biogenesis and in those bacteria that undergo differentiation, in morphogenesis control.</text>
</comment>
<comment type="cofactor">
    <cofactor evidence="1">
        <name>Mg(2+)</name>
        <dbReference type="ChEBI" id="CHEBI:18420"/>
    </cofactor>
</comment>
<comment type="subunit">
    <text evidence="1">Monomer.</text>
</comment>
<comment type="subcellular location">
    <subcellularLocation>
        <location evidence="1">Cytoplasm</location>
    </subcellularLocation>
</comment>
<comment type="similarity">
    <text evidence="1">Belongs to the TRAFAC class OBG-HflX-like GTPase superfamily. OBG GTPase family.</text>
</comment>
<evidence type="ECO:0000255" key="1">
    <source>
        <dbReference type="HAMAP-Rule" id="MF_01454"/>
    </source>
</evidence>
<evidence type="ECO:0000255" key="2">
    <source>
        <dbReference type="PROSITE-ProRule" id="PRU01231"/>
    </source>
</evidence>
<evidence type="ECO:0000256" key="3">
    <source>
        <dbReference type="SAM" id="MobiDB-lite"/>
    </source>
</evidence>
<gene>
    <name evidence="1" type="primary">obg</name>
    <name type="ordered locus">Swoo_1006</name>
</gene>
<dbReference type="EC" id="3.6.5.-" evidence="1"/>
<dbReference type="EMBL" id="CP000961">
    <property type="protein sequence ID" value="ACA85299.1"/>
    <property type="molecule type" value="Genomic_DNA"/>
</dbReference>
<dbReference type="RefSeq" id="WP_012323646.1">
    <property type="nucleotide sequence ID" value="NC_010506.1"/>
</dbReference>
<dbReference type="SMR" id="B1KGH1"/>
<dbReference type="STRING" id="392500.Swoo_1006"/>
<dbReference type="KEGG" id="swd:Swoo_1006"/>
<dbReference type="eggNOG" id="COG0536">
    <property type="taxonomic scope" value="Bacteria"/>
</dbReference>
<dbReference type="HOGENOM" id="CLU_011747_2_0_6"/>
<dbReference type="Proteomes" id="UP000002168">
    <property type="component" value="Chromosome"/>
</dbReference>
<dbReference type="GO" id="GO:0005737">
    <property type="term" value="C:cytoplasm"/>
    <property type="evidence" value="ECO:0007669"/>
    <property type="project" value="UniProtKB-SubCell"/>
</dbReference>
<dbReference type="GO" id="GO:0005525">
    <property type="term" value="F:GTP binding"/>
    <property type="evidence" value="ECO:0007669"/>
    <property type="project" value="UniProtKB-UniRule"/>
</dbReference>
<dbReference type="GO" id="GO:0003924">
    <property type="term" value="F:GTPase activity"/>
    <property type="evidence" value="ECO:0007669"/>
    <property type="project" value="UniProtKB-UniRule"/>
</dbReference>
<dbReference type="GO" id="GO:0000287">
    <property type="term" value="F:magnesium ion binding"/>
    <property type="evidence" value="ECO:0007669"/>
    <property type="project" value="InterPro"/>
</dbReference>
<dbReference type="GO" id="GO:0042254">
    <property type="term" value="P:ribosome biogenesis"/>
    <property type="evidence" value="ECO:0007669"/>
    <property type="project" value="UniProtKB-UniRule"/>
</dbReference>
<dbReference type="CDD" id="cd01898">
    <property type="entry name" value="Obg"/>
    <property type="match status" value="1"/>
</dbReference>
<dbReference type="FunFam" id="2.70.210.12:FF:000001">
    <property type="entry name" value="GTPase Obg"/>
    <property type="match status" value="1"/>
</dbReference>
<dbReference type="Gene3D" id="2.70.210.12">
    <property type="entry name" value="GTP1/OBG domain"/>
    <property type="match status" value="1"/>
</dbReference>
<dbReference type="Gene3D" id="3.40.50.300">
    <property type="entry name" value="P-loop containing nucleotide triphosphate hydrolases"/>
    <property type="match status" value="1"/>
</dbReference>
<dbReference type="HAMAP" id="MF_01454">
    <property type="entry name" value="GTPase_Obg"/>
    <property type="match status" value="1"/>
</dbReference>
<dbReference type="InterPro" id="IPR031167">
    <property type="entry name" value="G_OBG"/>
</dbReference>
<dbReference type="InterPro" id="IPR006073">
    <property type="entry name" value="GTP-bd"/>
</dbReference>
<dbReference type="InterPro" id="IPR014100">
    <property type="entry name" value="GTP-bd_Obg/CgtA"/>
</dbReference>
<dbReference type="InterPro" id="IPR006074">
    <property type="entry name" value="GTP1-OBG_CS"/>
</dbReference>
<dbReference type="InterPro" id="IPR006169">
    <property type="entry name" value="GTP1_OBG_dom"/>
</dbReference>
<dbReference type="InterPro" id="IPR036726">
    <property type="entry name" value="GTP1_OBG_dom_sf"/>
</dbReference>
<dbReference type="InterPro" id="IPR045086">
    <property type="entry name" value="OBG_GTPase"/>
</dbReference>
<dbReference type="InterPro" id="IPR027417">
    <property type="entry name" value="P-loop_NTPase"/>
</dbReference>
<dbReference type="NCBIfam" id="TIGR02729">
    <property type="entry name" value="Obg_CgtA"/>
    <property type="match status" value="1"/>
</dbReference>
<dbReference type="NCBIfam" id="NF008955">
    <property type="entry name" value="PRK12297.1"/>
    <property type="match status" value="1"/>
</dbReference>
<dbReference type="NCBIfam" id="NF008956">
    <property type="entry name" value="PRK12299.1"/>
    <property type="match status" value="1"/>
</dbReference>
<dbReference type="PANTHER" id="PTHR11702">
    <property type="entry name" value="DEVELOPMENTALLY REGULATED GTP-BINDING PROTEIN-RELATED"/>
    <property type="match status" value="1"/>
</dbReference>
<dbReference type="PANTHER" id="PTHR11702:SF31">
    <property type="entry name" value="MITOCHONDRIAL RIBOSOME-ASSOCIATED GTPASE 2"/>
    <property type="match status" value="1"/>
</dbReference>
<dbReference type="Pfam" id="PF01018">
    <property type="entry name" value="GTP1_OBG"/>
    <property type="match status" value="1"/>
</dbReference>
<dbReference type="Pfam" id="PF01926">
    <property type="entry name" value="MMR_HSR1"/>
    <property type="match status" value="1"/>
</dbReference>
<dbReference type="PIRSF" id="PIRSF002401">
    <property type="entry name" value="GTP_bd_Obg/CgtA"/>
    <property type="match status" value="1"/>
</dbReference>
<dbReference type="PRINTS" id="PR00326">
    <property type="entry name" value="GTP1OBG"/>
</dbReference>
<dbReference type="SUPFAM" id="SSF82051">
    <property type="entry name" value="Obg GTP-binding protein N-terminal domain"/>
    <property type="match status" value="1"/>
</dbReference>
<dbReference type="SUPFAM" id="SSF52540">
    <property type="entry name" value="P-loop containing nucleoside triphosphate hydrolases"/>
    <property type="match status" value="1"/>
</dbReference>
<dbReference type="PROSITE" id="PS51710">
    <property type="entry name" value="G_OBG"/>
    <property type="match status" value="1"/>
</dbReference>
<dbReference type="PROSITE" id="PS00905">
    <property type="entry name" value="GTP1_OBG"/>
    <property type="match status" value="1"/>
</dbReference>
<dbReference type="PROSITE" id="PS51883">
    <property type="entry name" value="OBG"/>
    <property type="match status" value="1"/>
</dbReference>
<feature type="chain" id="PRO_0000386253" description="GTPase Obg">
    <location>
        <begin position="1"/>
        <end position="389"/>
    </location>
</feature>
<feature type="domain" description="Obg" evidence="2">
    <location>
        <begin position="1"/>
        <end position="159"/>
    </location>
</feature>
<feature type="domain" description="OBG-type G" evidence="1">
    <location>
        <begin position="160"/>
        <end position="333"/>
    </location>
</feature>
<feature type="region of interest" description="Disordered" evidence="3">
    <location>
        <begin position="122"/>
        <end position="144"/>
    </location>
</feature>
<feature type="binding site" evidence="1">
    <location>
        <begin position="166"/>
        <end position="173"/>
    </location>
    <ligand>
        <name>GTP</name>
        <dbReference type="ChEBI" id="CHEBI:37565"/>
    </ligand>
</feature>
<feature type="binding site" evidence="1">
    <location>
        <position position="173"/>
    </location>
    <ligand>
        <name>Mg(2+)</name>
        <dbReference type="ChEBI" id="CHEBI:18420"/>
    </ligand>
</feature>
<feature type="binding site" evidence="1">
    <location>
        <begin position="191"/>
        <end position="195"/>
    </location>
    <ligand>
        <name>GTP</name>
        <dbReference type="ChEBI" id="CHEBI:37565"/>
    </ligand>
</feature>
<feature type="binding site" evidence="1">
    <location>
        <position position="193"/>
    </location>
    <ligand>
        <name>Mg(2+)</name>
        <dbReference type="ChEBI" id="CHEBI:18420"/>
    </ligand>
</feature>
<feature type="binding site" evidence="1">
    <location>
        <begin position="213"/>
        <end position="216"/>
    </location>
    <ligand>
        <name>GTP</name>
        <dbReference type="ChEBI" id="CHEBI:37565"/>
    </ligand>
</feature>
<feature type="binding site" evidence="1">
    <location>
        <begin position="283"/>
        <end position="286"/>
    </location>
    <ligand>
        <name>GTP</name>
        <dbReference type="ChEBI" id="CHEBI:37565"/>
    </ligand>
</feature>
<feature type="binding site" evidence="1">
    <location>
        <begin position="314"/>
        <end position="316"/>
    </location>
    <ligand>
        <name>GTP</name>
        <dbReference type="ChEBI" id="CHEBI:37565"/>
    </ligand>
</feature>
<protein>
    <recommendedName>
        <fullName evidence="1">GTPase Obg</fullName>
        <ecNumber evidence="1">3.6.5.-</ecNumber>
    </recommendedName>
    <alternativeName>
        <fullName evidence="1">GTP-binding protein Obg</fullName>
    </alternativeName>
</protein>